<dbReference type="EC" id="3.4.21.-"/>
<dbReference type="EMBL" id="AF545579">
    <property type="protein sequence ID" value="AAN52350.1"/>
    <property type="molecule type" value="mRNA"/>
</dbReference>
<dbReference type="SMR" id="Q8AY78"/>
<dbReference type="MEROPS" id="S01.497"/>
<dbReference type="GO" id="GO:0005576">
    <property type="term" value="C:extracellular region"/>
    <property type="evidence" value="ECO:0007669"/>
    <property type="project" value="UniProtKB-SubCell"/>
</dbReference>
<dbReference type="GO" id="GO:0030141">
    <property type="term" value="C:secretory granule"/>
    <property type="evidence" value="ECO:0007669"/>
    <property type="project" value="TreeGrafter"/>
</dbReference>
<dbReference type="GO" id="GO:0004252">
    <property type="term" value="F:serine-type endopeptidase activity"/>
    <property type="evidence" value="ECO:0007669"/>
    <property type="project" value="InterPro"/>
</dbReference>
<dbReference type="GO" id="GO:0090729">
    <property type="term" value="F:toxin activity"/>
    <property type="evidence" value="ECO:0007669"/>
    <property type="project" value="UniProtKB-KW"/>
</dbReference>
<dbReference type="GO" id="GO:0006508">
    <property type="term" value="P:proteolysis"/>
    <property type="evidence" value="ECO:0007669"/>
    <property type="project" value="UniProtKB-KW"/>
</dbReference>
<dbReference type="CDD" id="cd00190">
    <property type="entry name" value="Tryp_SPc"/>
    <property type="match status" value="1"/>
</dbReference>
<dbReference type="FunFam" id="2.40.10.10:FF:000158">
    <property type="entry name" value="Thrombin-like enzyme saxthrombin"/>
    <property type="match status" value="1"/>
</dbReference>
<dbReference type="FunFam" id="2.40.10.10:FF:000153">
    <property type="entry name" value="Venom plasminogen activator TSV-PA"/>
    <property type="match status" value="1"/>
</dbReference>
<dbReference type="Gene3D" id="2.40.10.10">
    <property type="entry name" value="Trypsin-like serine proteases"/>
    <property type="match status" value="2"/>
</dbReference>
<dbReference type="InterPro" id="IPR009003">
    <property type="entry name" value="Peptidase_S1_PA"/>
</dbReference>
<dbReference type="InterPro" id="IPR043504">
    <property type="entry name" value="Peptidase_S1_PA_chymotrypsin"/>
</dbReference>
<dbReference type="InterPro" id="IPR001314">
    <property type="entry name" value="Peptidase_S1A"/>
</dbReference>
<dbReference type="InterPro" id="IPR001254">
    <property type="entry name" value="Trypsin_dom"/>
</dbReference>
<dbReference type="InterPro" id="IPR018114">
    <property type="entry name" value="TRYPSIN_HIS"/>
</dbReference>
<dbReference type="InterPro" id="IPR033116">
    <property type="entry name" value="TRYPSIN_SER"/>
</dbReference>
<dbReference type="PANTHER" id="PTHR24271:SF47">
    <property type="entry name" value="KALLIKREIN-1"/>
    <property type="match status" value="1"/>
</dbReference>
<dbReference type="PANTHER" id="PTHR24271">
    <property type="entry name" value="KALLIKREIN-RELATED"/>
    <property type="match status" value="1"/>
</dbReference>
<dbReference type="Pfam" id="PF00089">
    <property type="entry name" value="Trypsin"/>
    <property type="match status" value="1"/>
</dbReference>
<dbReference type="PRINTS" id="PR00722">
    <property type="entry name" value="CHYMOTRYPSIN"/>
</dbReference>
<dbReference type="SMART" id="SM00020">
    <property type="entry name" value="Tryp_SPc"/>
    <property type="match status" value="1"/>
</dbReference>
<dbReference type="SUPFAM" id="SSF50494">
    <property type="entry name" value="Trypsin-like serine proteases"/>
    <property type="match status" value="1"/>
</dbReference>
<dbReference type="PROSITE" id="PS50240">
    <property type="entry name" value="TRYPSIN_DOM"/>
    <property type="match status" value="1"/>
</dbReference>
<dbReference type="PROSITE" id="PS00134">
    <property type="entry name" value="TRYPSIN_HIS"/>
    <property type="match status" value="1"/>
</dbReference>
<dbReference type="PROSITE" id="PS00135">
    <property type="entry name" value="TRYPSIN_SER"/>
    <property type="match status" value="1"/>
</dbReference>
<sequence length="258" mass="28135">MVLIRVLANLLILQLSYAQKSSELVVGGRPCNINEHRSLVVLFNSSGFLCGGTLINQDWVVTAAHCDSNNFQMIFGVHSKNVPNEDEQRRVPKEKFFCDSNKNYTQWNKDIMLIRLNSPVNNSTHIAPLSLPSSPPIVGSVCRIMGWGTITFPNETYPDVPHCANINLFNYTVCHGAHAGLPATSRTLCAGVLEGGKDTCKGDSGGPLICNGQFQGIVSWGGHPCAQPREPGVYTKVFDHLDWIQNIIAGNTTATCPL</sequence>
<evidence type="ECO:0000250" key="1"/>
<evidence type="ECO:0000255" key="2"/>
<evidence type="ECO:0000255" key="3">
    <source>
        <dbReference type="PROSITE-ProRule" id="PRU00274"/>
    </source>
</evidence>
<name>VSP5M_TRIST</name>
<comment type="function">
    <text evidence="1">Snake venom serine protease that may act in the hemostasis system of the prey.</text>
</comment>
<comment type="subunit">
    <text evidence="1">Monomer.</text>
</comment>
<comment type="subcellular location">
    <subcellularLocation>
        <location evidence="1">Secreted</location>
    </subcellularLocation>
</comment>
<comment type="tissue specificity">
    <text>Expressed by the venom gland.</text>
</comment>
<comment type="similarity">
    <text evidence="3">Belongs to the peptidase S1 family. Snake venom subfamily.</text>
</comment>
<accession>Q8AY78</accession>
<organism>
    <name type="scientific">Trimeresurus stejnegeri</name>
    <name type="common">Chinese green tree viper</name>
    <name type="synonym">Viridovipera stejnegeri</name>
    <dbReference type="NCBI Taxonomy" id="39682"/>
    <lineage>
        <taxon>Eukaryota</taxon>
        <taxon>Metazoa</taxon>
        <taxon>Chordata</taxon>
        <taxon>Craniata</taxon>
        <taxon>Vertebrata</taxon>
        <taxon>Euteleostomi</taxon>
        <taxon>Lepidosauria</taxon>
        <taxon>Squamata</taxon>
        <taxon>Bifurcata</taxon>
        <taxon>Unidentata</taxon>
        <taxon>Episquamata</taxon>
        <taxon>Toxicofera</taxon>
        <taxon>Serpentes</taxon>
        <taxon>Colubroidea</taxon>
        <taxon>Viperidae</taxon>
        <taxon>Crotalinae</taxon>
        <taxon>Trimeresurus</taxon>
    </lineage>
</organism>
<feature type="signal peptide" evidence="2">
    <location>
        <begin position="1"/>
        <end position="18"/>
    </location>
</feature>
<feature type="propeptide" id="PRO_0000295842" evidence="1">
    <location>
        <begin position="19"/>
        <end position="24"/>
    </location>
</feature>
<feature type="chain" id="PRO_0000295843" description="Snake venom serine protease 5">
    <location>
        <begin position="25"/>
        <end position="258"/>
    </location>
</feature>
<feature type="domain" description="Peptidase S1" evidence="3">
    <location>
        <begin position="25"/>
        <end position="249"/>
    </location>
</feature>
<feature type="active site" description="Charge relay system" evidence="1">
    <location>
        <position position="65"/>
    </location>
</feature>
<feature type="active site" description="Charge relay system" evidence="1">
    <location>
        <position position="110"/>
    </location>
</feature>
<feature type="active site" description="Charge relay system" evidence="1">
    <location>
        <position position="204"/>
    </location>
</feature>
<feature type="glycosylation site" description="N-linked (GlcNAc...) asparagine" evidence="2">
    <location>
        <position position="44"/>
    </location>
</feature>
<feature type="glycosylation site" description="N-linked (GlcNAc...) asparagine" evidence="2">
    <location>
        <position position="103"/>
    </location>
</feature>
<feature type="glycosylation site" description="N-linked (GlcNAc...) asparagine" evidence="2">
    <location>
        <position position="121"/>
    </location>
</feature>
<feature type="glycosylation site" description="N-linked (GlcNAc...) asparagine" evidence="2">
    <location>
        <position position="122"/>
    </location>
</feature>
<feature type="glycosylation site" description="N-linked (GlcNAc...) asparagine" evidence="2">
    <location>
        <position position="154"/>
    </location>
</feature>
<feature type="glycosylation site" description="N-linked (GlcNAc...) asparagine" evidence="2">
    <location>
        <position position="170"/>
    </location>
</feature>
<feature type="glycosylation site" description="N-linked (GlcNAc...) asparagine" evidence="2">
    <location>
        <position position="251"/>
    </location>
</feature>
<feature type="disulfide bond" evidence="3">
    <location>
        <begin position="31"/>
        <end position="163"/>
    </location>
</feature>
<feature type="disulfide bond" evidence="3">
    <location>
        <begin position="50"/>
        <end position="66"/>
    </location>
</feature>
<feature type="disulfide bond" evidence="3">
    <location>
        <begin position="98"/>
        <end position="256"/>
    </location>
</feature>
<feature type="disulfide bond" evidence="3">
    <location>
        <begin position="142"/>
        <end position="210"/>
    </location>
</feature>
<feature type="disulfide bond" evidence="3">
    <location>
        <begin position="174"/>
        <end position="189"/>
    </location>
</feature>
<feature type="disulfide bond" evidence="3">
    <location>
        <begin position="200"/>
        <end position="225"/>
    </location>
</feature>
<reference key="1">
    <citation type="submission" date="2002-09" db="EMBL/GenBank/DDBJ databases">
        <title>Molecular cloning and sequence comparison of serine proteases from the venom of Trimeresurus stejnegeri.</title>
        <authorList>
            <person name="Lee W.-H."/>
            <person name="Zhang Y."/>
        </authorList>
    </citation>
    <scope>NUCLEOTIDE SEQUENCE [MRNA]</scope>
    <source>
        <tissue>Venom gland</tissue>
    </source>
</reference>
<keyword id="KW-1015">Disulfide bond</keyword>
<keyword id="KW-0325">Glycoprotein</keyword>
<keyword id="KW-1199">Hemostasis impairing toxin</keyword>
<keyword id="KW-0378">Hydrolase</keyword>
<keyword id="KW-0645">Protease</keyword>
<keyword id="KW-0964">Secreted</keyword>
<keyword id="KW-0720">Serine protease</keyword>
<keyword id="KW-0732">Signal</keyword>
<keyword id="KW-0800">Toxin</keyword>
<keyword id="KW-0865">Zymogen</keyword>
<proteinExistence type="evidence at transcript level"/>
<protein>
    <recommendedName>
        <fullName>Snake venom serine protease 5</fullName>
        <shortName>SVSP</shortName>
        <ecNumber>3.4.21.-</ecNumber>
    </recommendedName>
</protein>